<comment type="function">
    <text evidence="1">Catalyzes the dephosphorylation of undecaprenyl diphosphate (UPP). Confers resistance to bacitracin.</text>
</comment>
<comment type="catalytic activity">
    <reaction evidence="1">
        <text>di-trans,octa-cis-undecaprenyl diphosphate + H2O = di-trans,octa-cis-undecaprenyl phosphate + phosphate + H(+)</text>
        <dbReference type="Rhea" id="RHEA:28094"/>
        <dbReference type="ChEBI" id="CHEBI:15377"/>
        <dbReference type="ChEBI" id="CHEBI:15378"/>
        <dbReference type="ChEBI" id="CHEBI:43474"/>
        <dbReference type="ChEBI" id="CHEBI:58405"/>
        <dbReference type="ChEBI" id="CHEBI:60392"/>
        <dbReference type="EC" id="3.6.1.27"/>
    </reaction>
</comment>
<comment type="subcellular location">
    <subcellularLocation>
        <location evidence="1">Cell inner membrane</location>
        <topology evidence="1">Multi-pass membrane protein</topology>
    </subcellularLocation>
</comment>
<comment type="miscellaneous">
    <text>Bacitracin is thought to be involved in the inhibition of peptidoglycan synthesis by sequestering undecaprenyl diphosphate, thereby reducing the pool of lipid carrier available.</text>
</comment>
<comment type="similarity">
    <text evidence="1">Belongs to the UppP family.</text>
</comment>
<proteinExistence type="inferred from homology"/>
<keyword id="KW-0046">Antibiotic resistance</keyword>
<keyword id="KW-0997">Cell inner membrane</keyword>
<keyword id="KW-1003">Cell membrane</keyword>
<keyword id="KW-0133">Cell shape</keyword>
<keyword id="KW-0961">Cell wall biogenesis/degradation</keyword>
<keyword id="KW-0378">Hydrolase</keyword>
<keyword id="KW-0472">Membrane</keyword>
<keyword id="KW-0573">Peptidoglycan synthesis</keyword>
<keyword id="KW-0812">Transmembrane</keyword>
<keyword id="KW-1133">Transmembrane helix</keyword>
<sequence>MFSEYLKFFLYGLIQGLTEFFPVSSTAHLKVISVFFGIDDPGPSLSAIIQLGSVLALVCYFRNDFFKLKIQSSKKIFDYLIHERLLRSIFIGTIPIILLGGTIKLFVPYFFDEIFRSNLSIALVSFLMAILMYIADRSKKGSINLKNHKYSDSFLIGLSQALAIFPGVSRSGVTISTALLSGWGRSDSAKFSFLLGMPAISFAAIVEFISSFNAFSSFSFFPLIVGLTTTFLSSLLAIHFLLKYFSSNGLKLFIIYRIVFGFVILLNL</sequence>
<reference key="1">
    <citation type="journal article" date="2006" name="Science">
        <title>Genomic islands and the ecology and evolution of Prochlorococcus.</title>
        <authorList>
            <person name="Coleman M.L."/>
            <person name="Sullivan M.B."/>
            <person name="Martiny A.C."/>
            <person name="Steglich C."/>
            <person name="Barry K."/>
            <person name="Delong E.F."/>
            <person name="Chisholm S.W."/>
        </authorList>
    </citation>
    <scope>NUCLEOTIDE SEQUENCE [LARGE SCALE GENOMIC DNA]</scope>
    <source>
        <strain>MIT 9312</strain>
    </source>
</reference>
<organism>
    <name type="scientific">Prochlorococcus marinus (strain MIT 9312)</name>
    <dbReference type="NCBI Taxonomy" id="74546"/>
    <lineage>
        <taxon>Bacteria</taxon>
        <taxon>Bacillati</taxon>
        <taxon>Cyanobacteriota</taxon>
        <taxon>Cyanophyceae</taxon>
        <taxon>Synechococcales</taxon>
        <taxon>Prochlorococcaceae</taxon>
        <taxon>Prochlorococcus</taxon>
    </lineage>
</organism>
<gene>
    <name evidence="1" type="primary">uppP</name>
    <name type="ordered locus">PMT9312_0843</name>
</gene>
<evidence type="ECO:0000255" key="1">
    <source>
        <dbReference type="HAMAP-Rule" id="MF_01006"/>
    </source>
</evidence>
<protein>
    <recommendedName>
        <fullName evidence="1">Undecaprenyl-diphosphatase</fullName>
        <ecNumber evidence="1">3.6.1.27</ecNumber>
    </recommendedName>
    <alternativeName>
        <fullName evidence="1">Bacitracin resistance protein</fullName>
    </alternativeName>
    <alternativeName>
        <fullName evidence="1">Undecaprenyl pyrophosphate phosphatase</fullName>
    </alternativeName>
</protein>
<name>UPPP_PROM9</name>
<accession>Q31B42</accession>
<dbReference type="EC" id="3.6.1.27" evidence="1"/>
<dbReference type="EMBL" id="CP000111">
    <property type="protein sequence ID" value="ABB49903.1"/>
    <property type="molecule type" value="Genomic_DNA"/>
</dbReference>
<dbReference type="RefSeq" id="WP_011376398.1">
    <property type="nucleotide sequence ID" value="NC_007577.1"/>
</dbReference>
<dbReference type="SMR" id="Q31B42"/>
<dbReference type="STRING" id="74546.PMT9312_0843"/>
<dbReference type="KEGG" id="pmi:PMT9312_0843"/>
<dbReference type="eggNOG" id="COG1968">
    <property type="taxonomic scope" value="Bacteria"/>
</dbReference>
<dbReference type="HOGENOM" id="CLU_060296_1_0_3"/>
<dbReference type="OrthoDB" id="9808289at2"/>
<dbReference type="Proteomes" id="UP000002715">
    <property type="component" value="Chromosome"/>
</dbReference>
<dbReference type="GO" id="GO:0005886">
    <property type="term" value="C:plasma membrane"/>
    <property type="evidence" value="ECO:0007669"/>
    <property type="project" value="UniProtKB-SubCell"/>
</dbReference>
<dbReference type="GO" id="GO:0050380">
    <property type="term" value="F:undecaprenyl-diphosphatase activity"/>
    <property type="evidence" value="ECO:0007669"/>
    <property type="project" value="UniProtKB-UniRule"/>
</dbReference>
<dbReference type="GO" id="GO:0071555">
    <property type="term" value="P:cell wall organization"/>
    <property type="evidence" value="ECO:0007669"/>
    <property type="project" value="UniProtKB-KW"/>
</dbReference>
<dbReference type="GO" id="GO:0009252">
    <property type="term" value="P:peptidoglycan biosynthetic process"/>
    <property type="evidence" value="ECO:0007669"/>
    <property type="project" value="UniProtKB-KW"/>
</dbReference>
<dbReference type="GO" id="GO:0008360">
    <property type="term" value="P:regulation of cell shape"/>
    <property type="evidence" value="ECO:0007669"/>
    <property type="project" value="UniProtKB-KW"/>
</dbReference>
<dbReference type="GO" id="GO:0046677">
    <property type="term" value="P:response to antibiotic"/>
    <property type="evidence" value="ECO:0007669"/>
    <property type="project" value="UniProtKB-UniRule"/>
</dbReference>
<dbReference type="HAMAP" id="MF_01006">
    <property type="entry name" value="Undec_diphosphatase"/>
    <property type="match status" value="1"/>
</dbReference>
<dbReference type="InterPro" id="IPR003824">
    <property type="entry name" value="UppP"/>
</dbReference>
<dbReference type="PANTHER" id="PTHR30622">
    <property type="entry name" value="UNDECAPRENYL-DIPHOSPHATASE"/>
    <property type="match status" value="1"/>
</dbReference>
<dbReference type="PANTHER" id="PTHR30622:SF4">
    <property type="entry name" value="UNDECAPRENYL-DIPHOSPHATASE"/>
    <property type="match status" value="1"/>
</dbReference>
<dbReference type="Pfam" id="PF02673">
    <property type="entry name" value="BacA"/>
    <property type="match status" value="1"/>
</dbReference>
<feature type="chain" id="PRO_0000250249" description="Undecaprenyl-diphosphatase">
    <location>
        <begin position="1"/>
        <end position="268"/>
    </location>
</feature>
<feature type="transmembrane region" description="Helical" evidence="1">
    <location>
        <begin position="41"/>
        <end position="61"/>
    </location>
</feature>
<feature type="transmembrane region" description="Helical" evidence="1">
    <location>
        <begin position="89"/>
        <end position="109"/>
    </location>
</feature>
<feature type="transmembrane region" description="Helical" evidence="1">
    <location>
        <begin position="114"/>
        <end position="134"/>
    </location>
</feature>
<feature type="transmembrane region" description="Helical" evidence="1">
    <location>
        <begin position="155"/>
        <end position="175"/>
    </location>
</feature>
<feature type="transmembrane region" description="Helical" evidence="1">
    <location>
        <begin position="191"/>
        <end position="211"/>
    </location>
</feature>
<feature type="transmembrane region" description="Helical" evidence="1">
    <location>
        <begin position="218"/>
        <end position="238"/>
    </location>
</feature>
<feature type="transmembrane region" description="Helical" evidence="1">
    <location>
        <begin position="248"/>
        <end position="268"/>
    </location>
</feature>